<name>VL1_HPV63</name>
<keyword id="KW-0167">Capsid protein</keyword>
<keyword id="KW-1015">Disulfide bond</keyword>
<keyword id="KW-1048">Host nucleus</keyword>
<keyword id="KW-0945">Host-virus interaction</keyword>
<keyword id="KW-0426">Late protein</keyword>
<keyword id="KW-1185">Reference proteome</keyword>
<keyword id="KW-1145">T=7 icosahedral capsid protein</keyword>
<keyword id="KW-1161">Viral attachment to host cell</keyword>
<keyword id="KW-1162">Viral penetration into host cytoplasm</keyword>
<keyword id="KW-0946">Virion</keyword>
<keyword id="KW-1164">Virus endocytosis by host</keyword>
<keyword id="KW-1160">Virus entry into host cell</keyword>
<protein>
    <recommendedName>
        <fullName evidence="1">Major capsid protein L1</fullName>
    </recommendedName>
</protein>
<organism>
    <name type="scientific">Human papillomavirus type 63</name>
    <dbReference type="NCBI Taxonomy" id="28311"/>
    <lineage>
        <taxon>Viruses</taxon>
        <taxon>Monodnaviria</taxon>
        <taxon>Shotokuvirae</taxon>
        <taxon>Cossaviricota</taxon>
        <taxon>Papovaviricetes</taxon>
        <taxon>Zurhausenvirales</taxon>
        <taxon>Papillomaviridae</taxon>
        <taxon>Firstpapillomavirinae</taxon>
        <taxon>Mupapillomavirus</taxon>
        <taxon>Mupapillomavirus 2</taxon>
    </lineage>
</organism>
<proteinExistence type="inferred from homology"/>
<feature type="chain" id="PRO_0000133545" description="Major capsid protein L1">
    <location>
        <begin position="1"/>
        <end position="507"/>
    </location>
</feature>
<feature type="disulfide bond" description="Interchain (with C-433)" evidence="1">
    <location>
        <position position="176"/>
    </location>
</feature>
<feature type="disulfide bond" description="Interchain (with C-176)" evidence="1">
    <location>
        <position position="433"/>
    </location>
</feature>
<gene>
    <name evidence="1" type="primary">L1</name>
</gene>
<comment type="function">
    <text evidence="1">Forms an icosahedral capsid with a T=7 symmetry and a 50 nm diameter. The capsid is composed of 72 pentamers linked to each other by disulfide bonds and associated with L2 proteins. Binds to heparan sulfate proteoglycans on cell surface of basal layer keratinocytes to provide initial virion attachment. This binding mediates a conformational change in the virus capsid that facilitates efficient infection. The virion enters the host cell via endocytosis. During virus trafficking, L1 protein dissociates from the viral DNA and the genomic DNA is released to the host nucleus. The virion assembly takes place within the cell nucleus. Encapsulates the genomic DNA together with protein L2.</text>
</comment>
<comment type="subunit">
    <text evidence="1">Self-assembles into homopentamers. The capsid has an icosahedral symmetry and consists of 72 capsomers, with each capsomer being a pentamer of L1. Interacts with the minor capsid protein L2; this interaction is necessary for viral genome encapsidation. Interacts with protein E2; this interaction enhances E2-dependent replication and transcription activation.</text>
</comment>
<comment type="subcellular location">
    <subcellularLocation>
        <location evidence="1">Virion</location>
    </subcellularLocation>
    <subcellularLocation>
        <location evidence="1">Host nucleus</location>
    </subcellularLocation>
</comment>
<comment type="similarity">
    <text evidence="1">Belongs to the papillomaviridae L1 protein family.</text>
</comment>
<accession>Q07861</accession>
<organismHost>
    <name type="scientific">Homo sapiens</name>
    <name type="common">Human</name>
    <dbReference type="NCBI Taxonomy" id="9606"/>
</organismHost>
<sequence length="507" mass="57555">MAVWLPAQNKFYLPTQPITKILSSDDYVSRTNIFYHATSDRLLIVGHPLYEVTRANDNTMTVPKVSPNQYRVFRVRFPDPNRFAFGDKDIFDPETERLVWGLRGIEIGRGQPLGVGISGNPLLNRFDDAENPSRYNNTHATGDNRQNVAFDAKQTQMFLIGCTPATGEHWSIARRCAGTQFQLGDCPPIELVNTVIEDGDMFDIGLGAMDFGSLQANKADAPLDIAGTVCKYPDYIKMGQEVHGNSLFFFARREQMYLRHVFTHAGIVSEKEKVPTSAYIAAKAEQPQNTIATDNYFVAPSGSLVSSDVQIFNRPYWLQRSQGQNNGICWRNELFVTVADNTRGTTMNINVLNKATPETYDSADYNEYTRHVEEYELSFIVQLCKVKLTPENLAFLHNMDPTIIDSWQLTVSQPPANAIEDKYRFIESLATKCPDNVPPPTPTDPYKDLRFWDVDLSERMSEQLDQFPLGRKFLYQSGLAQRSVPKTVNFRKRRSSNTTVAKRRRRA</sequence>
<reference key="1">
    <citation type="journal article" date="1993" name="Virology">
        <title>Two novel types of human papillomavirus, HPV 63 and HPV 65: comparisons of their clinical and histological features and DNA sequences to other HPV types.</title>
        <authorList>
            <person name="Egawa K."/>
            <person name="Delius H."/>
            <person name="Matsukura T."/>
            <person name="Kawashima M."/>
            <person name="de Villiers E.M."/>
        </authorList>
    </citation>
    <scope>NUCLEOTIDE SEQUENCE [GENOMIC DNA]</scope>
</reference>
<dbReference type="EMBL" id="X70828">
    <property type="protein sequence ID" value="CAA50170.1"/>
    <property type="molecule type" value="Genomic_DNA"/>
</dbReference>
<dbReference type="RefSeq" id="NP_040902.1">
    <property type="nucleotide sequence ID" value="NC_001458.1"/>
</dbReference>
<dbReference type="SMR" id="Q07861"/>
<dbReference type="KEGG" id="vg:1494575"/>
<dbReference type="OrthoDB" id="5037at10239"/>
<dbReference type="Proteomes" id="UP000007671">
    <property type="component" value="Segment"/>
</dbReference>
<dbReference type="GO" id="GO:0042025">
    <property type="term" value="C:host cell nucleus"/>
    <property type="evidence" value="ECO:0007669"/>
    <property type="project" value="UniProtKB-SubCell"/>
</dbReference>
<dbReference type="GO" id="GO:0039620">
    <property type="term" value="C:T=7 icosahedral viral capsid"/>
    <property type="evidence" value="ECO:0007669"/>
    <property type="project" value="UniProtKB-UniRule"/>
</dbReference>
<dbReference type="GO" id="GO:0005198">
    <property type="term" value="F:structural molecule activity"/>
    <property type="evidence" value="ECO:0007669"/>
    <property type="project" value="UniProtKB-UniRule"/>
</dbReference>
<dbReference type="GO" id="GO:0075509">
    <property type="term" value="P:endocytosis involved in viral entry into host cell"/>
    <property type="evidence" value="ECO:0007669"/>
    <property type="project" value="UniProtKB-KW"/>
</dbReference>
<dbReference type="GO" id="GO:0019062">
    <property type="term" value="P:virion attachment to host cell"/>
    <property type="evidence" value="ECO:0007669"/>
    <property type="project" value="UniProtKB-UniRule"/>
</dbReference>
<dbReference type="Gene3D" id="2.60.175.20">
    <property type="entry name" value="Major capsid L1 (late) superfamily, Papillomavirus"/>
    <property type="match status" value="1"/>
</dbReference>
<dbReference type="HAMAP" id="MF_04002">
    <property type="entry name" value="PPV_L1"/>
    <property type="match status" value="1"/>
</dbReference>
<dbReference type="InterPro" id="IPR002210">
    <property type="entry name" value="Capsid_L1_Papillomavir"/>
</dbReference>
<dbReference type="InterPro" id="IPR036973">
    <property type="entry name" value="Capsid_L1_sf_Papillomavir"/>
</dbReference>
<dbReference type="InterPro" id="IPR011222">
    <property type="entry name" value="dsDNA_vir_gr_I_capsid"/>
</dbReference>
<dbReference type="Pfam" id="PF00500">
    <property type="entry name" value="Late_protein_L1"/>
    <property type="match status" value="1"/>
</dbReference>
<dbReference type="PRINTS" id="PR00865">
    <property type="entry name" value="HPVCAPSIDL1"/>
</dbReference>
<dbReference type="SUPFAM" id="SSF88648">
    <property type="entry name" value="Group I dsDNA viruses"/>
    <property type="match status" value="1"/>
</dbReference>
<evidence type="ECO:0000255" key="1">
    <source>
        <dbReference type="HAMAP-Rule" id="MF_04002"/>
    </source>
</evidence>